<proteinExistence type="evidence at protein level"/>
<protein>
    <recommendedName>
        <fullName>Methionine-binding lipoprotein MetQ</fullName>
    </recommendedName>
</protein>
<dbReference type="EMBL" id="AL009126">
    <property type="protein sequence ID" value="CAB15262.1"/>
    <property type="molecule type" value="Genomic_DNA"/>
</dbReference>
<dbReference type="PIR" id="B70020">
    <property type="entry name" value="B70020"/>
</dbReference>
<dbReference type="RefSeq" id="NP_391152.1">
    <property type="nucleotide sequence ID" value="NC_000964.3"/>
</dbReference>
<dbReference type="RefSeq" id="WP_003228595.1">
    <property type="nucleotide sequence ID" value="NZ_OZ025638.1"/>
</dbReference>
<dbReference type="PDB" id="4GOT">
    <property type="method" value="X-ray"/>
    <property type="resolution" value="1.95 A"/>
    <property type="chains" value="A=27-274"/>
</dbReference>
<dbReference type="PDBsum" id="4GOT"/>
<dbReference type="SMR" id="O32167"/>
<dbReference type="FunCoup" id="O32167">
    <property type="interactions" value="155"/>
</dbReference>
<dbReference type="STRING" id="224308.BSU32730"/>
<dbReference type="TCDB" id="3.A.1.24.2">
    <property type="family name" value="the atp-binding cassette (abc) superfamily"/>
</dbReference>
<dbReference type="jPOST" id="O32167"/>
<dbReference type="PaxDb" id="224308-BSU32730"/>
<dbReference type="DNASU" id="936716"/>
<dbReference type="EnsemblBacteria" id="CAB15262">
    <property type="protein sequence ID" value="CAB15262"/>
    <property type="gene ID" value="BSU_32730"/>
</dbReference>
<dbReference type="GeneID" id="936716"/>
<dbReference type="KEGG" id="bsu:BSU32730"/>
<dbReference type="PATRIC" id="fig|224308.179.peg.3546"/>
<dbReference type="eggNOG" id="COG1464">
    <property type="taxonomic scope" value="Bacteria"/>
</dbReference>
<dbReference type="InParanoid" id="O32167"/>
<dbReference type="OrthoDB" id="9812878at2"/>
<dbReference type="PhylomeDB" id="O32167"/>
<dbReference type="BioCyc" id="BSUB:BSU32730-MONOMER"/>
<dbReference type="EvolutionaryTrace" id="O32167"/>
<dbReference type="Proteomes" id="UP000001570">
    <property type="component" value="Chromosome"/>
</dbReference>
<dbReference type="GO" id="GO:0005886">
    <property type="term" value="C:plasma membrane"/>
    <property type="evidence" value="ECO:0007669"/>
    <property type="project" value="UniProtKB-SubCell"/>
</dbReference>
<dbReference type="GO" id="GO:0006865">
    <property type="term" value="P:amino acid transport"/>
    <property type="evidence" value="ECO:0007669"/>
    <property type="project" value="UniProtKB-KW"/>
</dbReference>
<dbReference type="CDD" id="cd13597">
    <property type="entry name" value="PBP2_lipoprotein_Tp32"/>
    <property type="match status" value="1"/>
</dbReference>
<dbReference type="Gene3D" id="3.40.190.10">
    <property type="entry name" value="Periplasmic binding protein-like II"/>
    <property type="match status" value="2"/>
</dbReference>
<dbReference type="InterPro" id="IPR004872">
    <property type="entry name" value="Lipoprotein_NlpA"/>
</dbReference>
<dbReference type="PANTHER" id="PTHR30429">
    <property type="entry name" value="D-METHIONINE-BINDING LIPOPROTEIN METQ"/>
    <property type="match status" value="1"/>
</dbReference>
<dbReference type="PANTHER" id="PTHR30429:SF0">
    <property type="entry name" value="METHIONINE-BINDING LIPOPROTEIN METQ"/>
    <property type="match status" value="1"/>
</dbReference>
<dbReference type="Pfam" id="PF03180">
    <property type="entry name" value="Lipoprotein_9"/>
    <property type="match status" value="1"/>
</dbReference>
<dbReference type="PIRSF" id="PIRSF002854">
    <property type="entry name" value="MetQ"/>
    <property type="match status" value="1"/>
</dbReference>
<dbReference type="SUPFAM" id="SSF53850">
    <property type="entry name" value="Periplasmic binding protein-like II"/>
    <property type="match status" value="1"/>
</dbReference>
<dbReference type="PROSITE" id="PS51257">
    <property type="entry name" value="PROKAR_LIPOPROTEIN"/>
    <property type="match status" value="1"/>
</dbReference>
<accession>O32167</accession>
<organism>
    <name type="scientific">Bacillus subtilis (strain 168)</name>
    <dbReference type="NCBI Taxonomy" id="224308"/>
    <lineage>
        <taxon>Bacteria</taxon>
        <taxon>Bacillati</taxon>
        <taxon>Bacillota</taxon>
        <taxon>Bacilli</taxon>
        <taxon>Bacillales</taxon>
        <taxon>Bacillaceae</taxon>
        <taxon>Bacillus</taxon>
    </lineage>
</organism>
<name>METQ_BACSU</name>
<gene>
    <name type="primary">metQ</name>
    <name type="synonym">yusA</name>
    <name type="ordered locus">BSU32730</name>
</gene>
<reference key="1">
    <citation type="journal article" date="1997" name="Nature">
        <title>The complete genome sequence of the Gram-positive bacterium Bacillus subtilis.</title>
        <authorList>
            <person name="Kunst F."/>
            <person name="Ogasawara N."/>
            <person name="Moszer I."/>
            <person name="Albertini A.M."/>
            <person name="Alloni G."/>
            <person name="Azevedo V."/>
            <person name="Bertero M.G."/>
            <person name="Bessieres P."/>
            <person name="Bolotin A."/>
            <person name="Borchert S."/>
            <person name="Borriss R."/>
            <person name="Boursier L."/>
            <person name="Brans A."/>
            <person name="Braun M."/>
            <person name="Brignell S.C."/>
            <person name="Bron S."/>
            <person name="Brouillet S."/>
            <person name="Bruschi C.V."/>
            <person name="Caldwell B."/>
            <person name="Capuano V."/>
            <person name="Carter N.M."/>
            <person name="Choi S.-K."/>
            <person name="Codani J.-J."/>
            <person name="Connerton I.F."/>
            <person name="Cummings N.J."/>
            <person name="Daniel R.A."/>
            <person name="Denizot F."/>
            <person name="Devine K.M."/>
            <person name="Duesterhoeft A."/>
            <person name="Ehrlich S.D."/>
            <person name="Emmerson P.T."/>
            <person name="Entian K.-D."/>
            <person name="Errington J."/>
            <person name="Fabret C."/>
            <person name="Ferrari E."/>
            <person name="Foulger D."/>
            <person name="Fritz C."/>
            <person name="Fujita M."/>
            <person name="Fujita Y."/>
            <person name="Fuma S."/>
            <person name="Galizzi A."/>
            <person name="Galleron N."/>
            <person name="Ghim S.-Y."/>
            <person name="Glaser P."/>
            <person name="Goffeau A."/>
            <person name="Golightly E.J."/>
            <person name="Grandi G."/>
            <person name="Guiseppi G."/>
            <person name="Guy B.J."/>
            <person name="Haga K."/>
            <person name="Haiech J."/>
            <person name="Harwood C.R."/>
            <person name="Henaut A."/>
            <person name="Hilbert H."/>
            <person name="Holsappel S."/>
            <person name="Hosono S."/>
            <person name="Hullo M.-F."/>
            <person name="Itaya M."/>
            <person name="Jones L.-M."/>
            <person name="Joris B."/>
            <person name="Karamata D."/>
            <person name="Kasahara Y."/>
            <person name="Klaerr-Blanchard M."/>
            <person name="Klein C."/>
            <person name="Kobayashi Y."/>
            <person name="Koetter P."/>
            <person name="Koningstein G."/>
            <person name="Krogh S."/>
            <person name="Kumano M."/>
            <person name="Kurita K."/>
            <person name="Lapidus A."/>
            <person name="Lardinois S."/>
            <person name="Lauber J."/>
            <person name="Lazarevic V."/>
            <person name="Lee S.-M."/>
            <person name="Levine A."/>
            <person name="Liu H."/>
            <person name="Masuda S."/>
            <person name="Mauel C."/>
            <person name="Medigue C."/>
            <person name="Medina N."/>
            <person name="Mellado R.P."/>
            <person name="Mizuno M."/>
            <person name="Moestl D."/>
            <person name="Nakai S."/>
            <person name="Noback M."/>
            <person name="Noone D."/>
            <person name="O'Reilly M."/>
            <person name="Ogawa K."/>
            <person name="Ogiwara A."/>
            <person name="Oudega B."/>
            <person name="Park S.-H."/>
            <person name="Parro V."/>
            <person name="Pohl T.M."/>
            <person name="Portetelle D."/>
            <person name="Porwollik S."/>
            <person name="Prescott A.M."/>
            <person name="Presecan E."/>
            <person name="Pujic P."/>
            <person name="Purnelle B."/>
            <person name="Rapoport G."/>
            <person name="Rey M."/>
            <person name="Reynolds S."/>
            <person name="Rieger M."/>
            <person name="Rivolta C."/>
            <person name="Rocha E."/>
            <person name="Roche B."/>
            <person name="Rose M."/>
            <person name="Sadaie Y."/>
            <person name="Sato T."/>
            <person name="Scanlan E."/>
            <person name="Schleich S."/>
            <person name="Schroeter R."/>
            <person name="Scoffone F."/>
            <person name="Sekiguchi J."/>
            <person name="Sekowska A."/>
            <person name="Seror S.J."/>
            <person name="Serror P."/>
            <person name="Shin B.-S."/>
            <person name="Soldo B."/>
            <person name="Sorokin A."/>
            <person name="Tacconi E."/>
            <person name="Takagi T."/>
            <person name="Takahashi H."/>
            <person name="Takemaru K."/>
            <person name="Takeuchi M."/>
            <person name="Tamakoshi A."/>
            <person name="Tanaka T."/>
            <person name="Terpstra P."/>
            <person name="Tognoni A."/>
            <person name="Tosato V."/>
            <person name="Uchiyama S."/>
            <person name="Vandenbol M."/>
            <person name="Vannier F."/>
            <person name="Vassarotti A."/>
            <person name="Viari A."/>
            <person name="Wambutt R."/>
            <person name="Wedler E."/>
            <person name="Wedler H."/>
            <person name="Weitzenegger T."/>
            <person name="Winters P."/>
            <person name="Wipat A."/>
            <person name="Yamamoto H."/>
            <person name="Yamane K."/>
            <person name="Yasumoto K."/>
            <person name="Yata K."/>
            <person name="Yoshida K."/>
            <person name="Yoshikawa H.-F."/>
            <person name="Zumstein E."/>
            <person name="Yoshikawa H."/>
            <person name="Danchin A."/>
        </authorList>
    </citation>
    <scope>NUCLEOTIDE SEQUENCE [LARGE SCALE GENOMIC DNA]</scope>
    <source>
        <strain>168</strain>
    </source>
</reference>
<reference key="2">
    <citation type="journal article" date="2004" name="Res. Microbiol.">
        <title>The metNPQ operon of Bacillus subtilis encodes an ABC permease transporting methionine sulfoxide, D- and L-methionine.</title>
        <authorList>
            <person name="Hullo M.-F."/>
            <person name="Auger S."/>
            <person name="Dassa E."/>
            <person name="Danchin A."/>
            <person name="Martin-Verstraete I."/>
        </authorList>
    </citation>
    <scope>PROBABLE FUNCTION IN METHIONINE AND METHIONINE SULFOXIDE TRANSPORT</scope>
    <scope>INDUCTION</scope>
    <source>
        <strain>168</strain>
    </source>
</reference>
<comment type="function">
    <text evidence="4">Part of the ABC transporter complex MetNPQ involved in methionine import. Binds the methionine and transfers it to the membrane-bound permease. It has also been shown to be involved in methionine sulfoxide transport (Probable).</text>
</comment>
<comment type="subunit">
    <text evidence="1">The complex is composed of two ATP-binding proteins (MetN), two transmembrane proteins (MetP) and a solute-binding protein (metQ).</text>
</comment>
<comment type="subcellular location">
    <subcellularLocation>
        <location evidence="4">Cell membrane</location>
        <topology evidence="4">Lipid-anchor</topology>
    </subcellularLocation>
</comment>
<comment type="induction">
    <text evidence="3">Repressed by methionine via the S-box system.</text>
</comment>
<comment type="similarity">
    <text evidence="4">Belongs to the NlpA lipoprotein family.</text>
</comment>
<sequence>MKKLFLGALLLVFAGVMAACGSNNGAESGKKEIVVAATKTPHAEILKEAEPLLKEKGYTLKVKVLSDYKMYNKALADKEVDANYFQHIPYLEQEMKENTDYKLVNAGAVHLEPFGIYSKTYKSLKDLPDGATIILTNNVAEQGRMLAMLENAGLITLDSKVETVDATLKDIKKNPKNLEFKKVAPELTAKAYENKEGDAVFINVNYAIQNKLNPKKDAIEVESTKNNPYANIIAVRKGEEDSAKIKALMEVLHSKKIKDFIEKKYDGAVLPVSE</sequence>
<evidence type="ECO:0000250" key="1"/>
<evidence type="ECO:0000255" key="2">
    <source>
        <dbReference type="PROSITE-ProRule" id="PRU00303"/>
    </source>
</evidence>
<evidence type="ECO:0000269" key="3">
    <source>
    </source>
</evidence>
<evidence type="ECO:0000305" key="4"/>
<evidence type="ECO:0007829" key="5">
    <source>
        <dbReference type="PDB" id="4GOT"/>
    </source>
</evidence>
<keyword id="KW-0002">3D-structure</keyword>
<keyword id="KW-0029">Amino-acid transport</keyword>
<keyword id="KW-1003">Cell membrane</keyword>
<keyword id="KW-0449">Lipoprotein</keyword>
<keyword id="KW-0472">Membrane</keyword>
<keyword id="KW-0564">Palmitate</keyword>
<keyword id="KW-1185">Reference proteome</keyword>
<keyword id="KW-0732">Signal</keyword>
<keyword id="KW-0813">Transport</keyword>
<feature type="signal peptide" evidence="2">
    <location>
        <begin position="1"/>
        <end position="19"/>
    </location>
</feature>
<feature type="chain" id="PRO_0000383645" description="Methionine-binding lipoprotein MetQ">
    <location>
        <begin position="20"/>
        <end position="274"/>
    </location>
</feature>
<feature type="lipid moiety-binding region" description="N-palmitoyl cysteine" evidence="2">
    <location>
        <position position="20"/>
    </location>
</feature>
<feature type="lipid moiety-binding region" description="S-diacylglycerol cysteine" evidence="2">
    <location>
        <position position="20"/>
    </location>
</feature>
<feature type="strand" evidence="5">
    <location>
        <begin position="32"/>
        <end position="37"/>
    </location>
</feature>
<feature type="turn" evidence="5">
    <location>
        <begin position="39"/>
        <end position="41"/>
    </location>
</feature>
<feature type="helix" evidence="5">
    <location>
        <begin position="42"/>
        <end position="54"/>
    </location>
</feature>
<feature type="turn" evidence="5">
    <location>
        <begin position="55"/>
        <end position="57"/>
    </location>
</feature>
<feature type="strand" evidence="5">
    <location>
        <begin position="59"/>
        <end position="63"/>
    </location>
</feature>
<feature type="helix" evidence="5">
    <location>
        <begin position="70"/>
        <end position="76"/>
    </location>
</feature>
<feature type="strand" evidence="5">
    <location>
        <begin position="81"/>
        <end position="87"/>
    </location>
</feature>
<feature type="helix" evidence="5">
    <location>
        <begin position="88"/>
        <end position="97"/>
    </location>
</feature>
<feature type="strand" evidence="5">
    <location>
        <begin position="103"/>
        <end position="111"/>
    </location>
</feature>
<feature type="strand" evidence="5">
    <location>
        <begin position="115"/>
        <end position="117"/>
    </location>
</feature>
<feature type="helix" evidence="5">
    <location>
        <begin position="124"/>
        <end position="126"/>
    </location>
</feature>
<feature type="strand" evidence="5">
    <location>
        <begin position="132"/>
        <end position="136"/>
    </location>
</feature>
<feature type="helix" evidence="5">
    <location>
        <begin position="139"/>
        <end position="141"/>
    </location>
</feature>
<feature type="helix" evidence="5">
    <location>
        <begin position="142"/>
        <end position="151"/>
    </location>
</feature>
<feature type="helix" evidence="5">
    <location>
        <begin position="163"/>
        <end position="165"/>
    </location>
</feature>
<feature type="helix" evidence="5">
    <location>
        <begin position="168"/>
        <end position="170"/>
    </location>
</feature>
<feature type="strand" evidence="5">
    <location>
        <begin position="171"/>
        <end position="173"/>
    </location>
</feature>
<feature type="strand" evidence="5">
    <location>
        <begin position="179"/>
        <end position="183"/>
    </location>
</feature>
<feature type="turn" evidence="5">
    <location>
        <begin position="185"/>
        <end position="187"/>
    </location>
</feature>
<feature type="helix" evidence="5">
    <location>
        <begin position="188"/>
        <end position="193"/>
    </location>
</feature>
<feature type="strand" evidence="5">
    <location>
        <begin position="197"/>
        <end position="202"/>
    </location>
</feature>
<feature type="helix" evidence="5">
    <location>
        <begin position="204"/>
        <end position="209"/>
    </location>
</feature>
<feature type="helix" evidence="5">
    <location>
        <begin position="214"/>
        <end position="217"/>
    </location>
</feature>
<feature type="strand" evidence="5">
    <location>
        <begin position="219"/>
        <end position="221"/>
    </location>
</feature>
<feature type="strand" evidence="5">
    <location>
        <begin position="231"/>
        <end position="236"/>
    </location>
</feature>
<feature type="helix" evidence="5">
    <location>
        <begin position="243"/>
        <end position="252"/>
    </location>
</feature>
<feature type="helix" evidence="5">
    <location>
        <begin position="255"/>
        <end position="264"/>
    </location>
</feature>
<feature type="turn" evidence="5">
    <location>
        <begin position="265"/>
        <end position="267"/>
    </location>
</feature>
<feature type="strand" evidence="5">
    <location>
        <begin position="268"/>
        <end position="271"/>
    </location>
</feature>